<name>GET1_PYRO7</name>
<gene>
    <name evidence="1" type="primary">GET1</name>
    <name type="ORF">MGG_07181</name>
</gene>
<dbReference type="EMBL" id="CM001232">
    <property type="protein sequence ID" value="EHA55578.1"/>
    <property type="molecule type" value="Genomic_DNA"/>
</dbReference>
<dbReference type="RefSeq" id="XP_003715385.1">
    <property type="nucleotide sequence ID" value="XM_003715337.1"/>
</dbReference>
<dbReference type="SMR" id="A4RHX3"/>
<dbReference type="STRING" id="242507.A4RHX3"/>
<dbReference type="EnsemblFungi" id="MGG_07181T0">
    <property type="protein sequence ID" value="MGG_07181T0"/>
    <property type="gene ID" value="MGG_07181"/>
</dbReference>
<dbReference type="GeneID" id="2683164"/>
<dbReference type="KEGG" id="mgr:MGG_07181"/>
<dbReference type="VEuPathDB" id="FungiDB:MGG_07181"/>
<dbReference type="eggNOG" id="KOG4253">
    <property type="taxonomic scope" value="Eukaryota"/>
</dbReference>
<dbReference type="HOGENOM" id="CLU_089418_1_0_1"/>
<dbReference type="InParanoid" id="A4RHX3"/>
<dbReference type="OMA" id="AEWIISF"/>
<dbReference type="OrthoDB" id="69461at2759"/>
<dbReference type="Proteomes" id="UP000009058">
    <property type="component" value="Chromosome 2"/>
</dbReference>
<dbReference type="GO" id="GO:0005783">
    <property type="term" value="C:endoplasmic reticulum"/>
    <property type="evidence" value="ECO:0000250"/>
    <property type="project" value="PAMGO_MGG"/>
</dbReference>
<dbReference type="GO" id="GO:0005789">
    <property type="term" value="C:endoplasmic reticulum membrane"/>
    <property type="evidence" value="ECO:0007669"/>
    <property type="project" value="UniProtKB-SubCell"/>
</dbReference>
<dbReference type="GO" id="GO:0043529">
    <property type="term" value="C:GET complex"/>
    <property type="evidence" value="ECO:0000250"/>
    <property type="project" value="PAMGO_MGG"/>
</dbReference>
<dbReference type="GO" id="GO:0043495">
    <property type="term" value="F:protein-membrane adaptor activity"/>
    <property type="evidence" value="ECO:0007669"/>
    <property type="project" value="TreeGrafter"/>
</dbReference>
<dbReference type="GO" id="GO:0030968">
    <property type="term" value="P:endoplasmic reticulum unfolded protein response"/>
    <property type="evidence" value="ECO:0000250"/>
    <property type="project" value="PAMGO_MGG"/>
</dbReference>
<dbReference type="GO" id="GO:0006874">
    <property type="term" value="P:intracellular calcium ion homeostasis"/>
    <property type="evidence" value="ECO:0000250"/>
    <property type="project" value="PAMGO_MGG"/>
</dbReference>
<dbReference type="GO" id="GO:0007005">
    <property type="term" value="P:mitochondrion organization"/>
    <property type="evidence" value="ECO:0000250"/>
    <property type="project" value="PAMGO_MGG"/>
</dbReference>
<dbReference type="GO" id="GO:0006486">
    <property type="term" value="P:protein glycosylation"/>
    <property type="evidence" value="ECO:0000250"/>
    <property type="project" value="PAMGO_MGG"/>
</dbReference>
<dbReference type="GO" id="GO:0006890">
    <property type="term" value="P:retrograde vesicle-mediated transport, Golgi to endoplasmic reticulum"/>
    <property type="evidence" value="ECO:0000250"/>
    <property type="project" value="PAMGO_MGG"/>
</dbReference>
<dbReference type="GO" id="GO:0071816">
    <property type="term" value="P:tail-anchored membrane protein insertion into ER membrane"/>
    <property type="evidence" value="ECO:0007669"/>
    <property type="project" value="InterPro"/>
</dbReference>
<dbReference type="FunFam" id="1.10.287.660:FF:000006">
    <property type="entry name" value="Protein GET1"/>
    <property type="match status" value="1"/>
</dbReference>
<dbReference type="Gene3D" id="1.10.287.660">
    <property type="entry name" value="Helix hairpin bin"/>
    <property type="match status" value="1"/>
</dbReference>
<dbReference type="HAMAP" id="MF_03113">
    <property type="entry name" value="Get1"/>
    <property type="match status" value="1"/>
</dbReference>
<dbReference type="InterPro" id="IPR028945">
    <property type="entry name" value="Get1"/>
</dbReference>
<dbReference type="InterPro" id="IPR027538">
    <property type="entry name" value="Get1_fungi"/>
</dbReference>
<dbReference type="InterPro" id="IPR029012">
    <property type="entry name" value="Helix_hairpin_bin_sf"/>
</dbReference>
<dbReference type="PANTHER" id="PTHR42650:SF1">
    <property type="entry name" value="GUIDED ENTRY OF TAIL-ANCHORED PROTEINS FACTOR 1"/>
    <property type="match status" value="1"/>
</dbReference>
<dbReference type="PANTHER" id="PTHR42650">
    <property type="entry name" value="TAIL-ANCHORED PROTEIN INSERTION RECEPTOR WRB"/>
    <property type="match status" value="1"/>
</dbReference>
<dbReference type="Pfam" id="PF04420">
    <property type="entry name" value="CHD5"/>
    <property type="match status" value="1"/>
</dbReference>
<proteinExistence type="inferred from homology"/>
<comment type="function">
    <text evidence="1">Required for the post-translational delivery of tail-anchored (TA) proteins to the endoplasmic reticulum. Acts as a membrane receptor for soluble GET3, which recognizes and selectively binds the transmembrane domain of TA proteins in the cytosol.</text>
</comment>
<comment type="subunit">
    <text evidence="1">Interacts with GET3.</text>
</comment>
<comment type="subcellular location">
    <subcellularLocation>
        <location evidence="1">Endoplasmic reticulum membrane</location>
        <topology evidence="1">Multi-pass membrane protein</topology>
    </subcellularLocation>
</comment>
<comment type="similarity">
    <text evidence="1">Belongs to the WRB/GET1 family.</text>
</comment>
<sequence length="215" mass="24583">MPSLLILIFTIEVAVELINTIGAATINNLLWRIFNALPTKLSAQFAEQRKLQQDYLKVRRELNATSSQDEFAKWAKLRRQHDKLLEQLEKKKAALDSTKGNFDKYITGIRWVGTQGLRYFLPFWYAKVPMFWLPYGWFPYYAEWLVSFPRAPMGSVSIASWQLACTGFVVLIKDAITALVVFVMGMRQSNVKQAVPVKAVSGEKASDEKEGKKEL</sequence>
<accession>A4RHX3</accession>
<accession>G4MTM0</accession>
<evidence type="ECO:0000255" key="1">
    <source>
        <dbReference type="HAMAP-Rule" id="MF_03113"/>
    </source>
</evidence>
<feature type="chain" id="PRO_0000388599" description="Protein GET1">
    <location>
        <begin position="1"/>
        <end position="215"/>
    </location>
</feature>
<feature type="topological domain" description="Lumenal" evidence="1">
    <location>
        <begin position="1"/>
        <end position="4"/>
    </location>
</feature>
<feature type="transmembrane region" description="Helical" evidence="1">
    <location>
        <begin position="5"/>
        <end position="24"/>
    </location>
</feature>
<feature type="topological domain" description="Cytoplasmic" evidence="1">
    <location>
        <begin position="25"/>
        <end position="110"/>
    </location>
</feature>
<feature type="transmembrane region" description="Helical" evidence="1">
    <location>
        <begin position="111"/>
        <end position="131"/>
    </location>
</feature>
<feature type="topological domain" description="Lumenal" evidence="1">
    <location>
        <begin position="132"/>
        <end position="155"/>
    </location>
</feature>
<feature type="transmembrane region" description="Helical" evidence="1">
    <location>
        <begin position="156"/>
        <end position="172"/>
    </location>
</feature>
<feature type="topological domain" description="Cytoplasmic" evidence="1">
    <location>
        <begin position="173"/>
        <end position="215"/>
    </location>
</feature>
<feature type="coiled-coil region" evidence="1">
    <location>
        <begin position="72"/>
        <end position="104"/>
    </location>
</feature>
<protein>
    <recommendedName>
        <fullName evidence="1">Protein GET1</fullName>
    </recommendedName>
    <alternativeName>
        <fullName evidence="1">Guided entry of tail-anchored proteins 1</fullName>
    </alternativeName>
</protein>
<reference key="1">
    <citation type="journal article" date="2005" name="Nature">
        <title>The genome sequence of the rice blast fungus Magnaporthe grisea.</title>
        <authorList>
            <person name="Dean R.A."/>
            <person name="Talbot N.J."/>
            <person name="Ebbole D.J."/>
            <person name="Farman M.L."/>
            <person name="Mitchell T.K."/>
            <person name="Orbach M.J."/>
            <person name="Thon M.R."/>
            <person name="Kulkarni R."/>
            <person name="Xu J.-R."/>
            <person name="Pan H."/>
            <person name="Read N.D."/>
            <person name="Lee Y.-H."/>
            <person name="Carbone I."/>
            <person name="Brown D."/>
            <person name="Oh Y.Y."/>
            <person name="Donofrio N."/>
            <person name="Jeong J.S."/>
            <person name="Soanes D.M."/>
            <person name="Djonovic S."/>
            <person name="Kolomiets E."/>
            <person name="Rehmeyer C."/>
            <person name="Li W."/>
            <person name="Harding M."/>
            <person name="Kim S."/>
            <person name="Lebrun M.-H."/>
            <person name="Bohnert H."/>
            <person name="Coughlan S."/>
            <person name="Butler J."/>
            <person name="Calvo S.E."/>
            <person name="Ma L.-J."/>
            <person name="Nicol R."/>
            <person name="Purcell S."/>
            <person name="Nusbaum C."/>
            <person name="Galagan J.E."/>
            <person name="Birren B.W."/>
        </authorList>
    </citation>
    <scope>NUCLEOTIDE SEQUENCE [LARGE SCALE GENOMIC DNA]</scope>
    <source>
        <strain>70-15 / ATCC MYA-4617 / FGSC 8958</strain>
    </source>
</reference>
<organism>
    <name type="scientific">Pyricularia oryzae (strain 70-15 / ATCC MYA-4617 / FGSC 8958)</name>
    <name type="common">Rice blast fungus</name>
    <name type="synonym">Magnaporthe oryzae</name>
    <dbReference type="NCBI Taxonomy" id="242507"/>
    <lineage>
        <taxon>Eukaryota</taxon>
        <taxon>Fungi</taxon>
        <taxon>Dikarya</taxon>
        <taxon>Ascomycota</taxon>
        <taxon>Pezizomycotina</taxon>
        <taxon>Sordariomycetes</taxon>
        <taxon>Sordariomycetidae</taxon>
        <taxon>Magnaporthales</taxon>
        <taxon>Pyriculariaceae</taxon>
        <taxon>Pyricularia</taxon>
    </lineage>
</organism>
<keyword id="KW-0175">Coiled coil</keyword>
<keyword id="KW-0256">Endoplasmic reticulum</keyword>
<keyword id="KW-0472">Membrane</keyword>
<keyword id="KW-1185">Reference proteome</keyword>
<keyword id="KW-0812">Transmembrane</keyword>
<keyword id="KW-1133">Transmembrane helix</keyword>
<keyword id="KW-0813">Transport</keyword>